<name>FPP6_ARATH</name>
<keyword id="KW-0025">Alternative splicing</keyword>
<keyword id="KW-0175">Coiled coil</keyword>
<keyword id="KW-1185">Reference proteome</keyword>
<feature type="chain" id="PRO_0000347204" description="Filament-like plant protein 6">
    <location>
        <begin position="1"/>
        <end position="1054"/>
    </location>
</feature>
<feature type="region of interest" description="Disordered" evidence="3">
    <location>
        <begin position="359"/>
        <end position="390"/>
    </location>
</feature>
<feature type="region of interest" description="Disordered" evidence="3">
    <location>
        <begin position="448"/>
        <end position="506"/>
    </location>
</feature>
<feature type="region of interest" description="Disordered" evidence="3">
    <location>
        <begin position="951"/>
        <end position="1054"/>
    </location>
</feature>
<feature type="coiled-coil region" evidence="2">
    <location>
        <begin position="64"/>
        <end position="139"/>
    </location>
</feature>
<feature type="coiled-coil region" evidence="2">
    <location>
        <begin position="174"/>
        <end position="200"/>
    </location>
</feature>
<feature type="coiled-coil region" evidence="2">
    <location>
        <begin position="250"/>
        <end position="341"/>
    </location>
</feature>
<feature type="coiled-coil region" evidence="2">
    <location>
        <begin position="389"/>
        <end position="463"/>
    </location>
</feature>
<feature type="coiled-coil region" evidence="2">
    <location>
        <begin position="637"/>
        <end position="666"/>
    </location>
</feature>
<feature type="coiled-coil region" evidence="2">
    <location>
        <begin position="788"/>
        <end position="944"/>
    </location>
</feature>
<feature type="compositionally biased region" description="Low complexity" evidence="3">
    <location>
        <begin position="371"/>
        <end position="380"/>
    </location>
</feature>
<feature type="compositionally biased region" description="Low complexity" evidence="3">
    <location>
        <begin position="450"/>
        <end position="461"/>
    </location>
</feature>
<feature type="compositionally biased region" description="Low complexity" evidence="3">
    <location>
        <begin position="470"/>
        <end position="494"/>
    </location>
</feature>
<feature type="compositionally biased region" description="Low complexity" evidence="3">
    <location>
        <begin position="1007"/>
        <end position="1032"/>
    </location>
</feature>
<sequence>MDRRSWPWKKKASDKSILVIDSAADASHSQIDKEAIKKPKYVQISVEQYTHFTGLEEQIKSYDVQIKGYDVQVKTYENQVESYEEQVKDFEEQIDAYDEKVHEYEEQVQKLNEDVEDLNEKLSVANEEIVTKEALVKQHSKVAEDAVSGWEKADAEALALKNTLESVTLSKLTAEDRAAHLDGALKECMRQIRNLKKDHEVKLHDVALSKTKQIEKMTMEFEKRMCDYEQELLRSAADSDALSRTLQERSNMLVKVSEEKSRADAEIETLKSNLEMCEREIKSLKYEVHVVSKELEIRNEEKNMCIRSAESANKQHLEGVKKIAKLEAECQRLRSLVRKKLPGPAALAQMKLEVENLGRDSGDARQKRSPVKVSSPCKSPGGYSSTGSEFSLDNAQKFQKENEFLTERLLAMEEETKMLKEALAKRNSELLESRNLCAQSTSKLQSLEAQLQQNNSQKSSLEVCPNLNTSNPSSSISVSEDGNDDSGSCSGSLSTNPSQQIKKEKDMAALERVESVNSHVELMDDFLEMEKLACLPNLSSSNGSIDSKDGSGDQKSEMVILDAHTDLEDSDRGSPAVMKFRSRLSKVLESVSPDADIQKIVGDIKCILQDVNACMDQEKPSEVHVHPEEVSDLCPEQNLVEDCHLAEQKLQSIHQDLKNAVSRIHDFVLLLRNEVKAGQDTSIEGNDFVELIEGFSVTFNHVLSGDKSLDDFVSNLANVFNEAMERKVSFRGLASSEVETLSPDCIDKVALPESKVVDKDSSQEIYQNGCVHNEPGVPCDENRVSGYESDSKLQEIEELRSEKEKMAVDIEGLKCQLQESEQLLADIRSQFDSAQRSNRLADTQLRCMTESYRSLESRAADLEIDVNQLKEKIQKLENELEDEKCNHQEAILRCHELEEHIQRHRNTSLVAEDDEEADIKSKQERELSAAAEKLAECQETIFVLGKQLKSFRPQPEQMRSPQTRNESYSEEEELGTTTTSVPKNYAVVDEGDSVNEVPRFMESPKCPSDSETSDTTTSPSRVGSRLSRSGSSTNATPEKASRGISRFFSSKSGY</sequence>
<dbReference type="EMBL" id="AC079679">
    <property type="protein sequence ID" value="AAG51782.1"/>
    <property type="molecule type" value="Genomic_DNA"/>
</dbReference>
<dbReference type="EMBL" id="CP002684">
    <property type="protein sequence ID" value="AEE32226.1"/>
    <property type="molecule type" value="Genomic_DNA"/>
</dbReference>
<dbReference type="EMBL" id="CP002684">
    <property type="protein sequence ID" value="ANM60034.1"/>
    <property type="molecule type" value="Genomic_DNA"/>
</dbReference>
<dbReference type="PIR" id="D96519">
    <property type="entry name" value="D96519"/>
</dbReference>
<dbReference type="RefSeq" id="NP_001322347.1">
    <molecule id="Q9C698-1"/>
    <property type="nucleotide sequence ID" value="NM_001333287.1"/>
</dbReference>
<dbReference type="RefSeq" id="NP_175226.1">
    <molecule id="Q9C698-1"/>
    <property type="nucleotide sequence ID" value="NM_103688.4"/>
</dbReference>
<dbReference type="SMR" id="Q9C698"/>
<dbReference type="FunCoup" id="Q9C698">
    <property type="interactions" value="619"/>
</dbReference>
<dbReference type="STRING" id="3702.Q9C698"/>
<dbReference type="iPTMnet" id="Q9C698"/>
<dbReference type="PaxDb" id="3702-AT1G47900.1"/>
<dbReference type="EnsemblPlants" id="AT1G47900.1">
    <molecule id="Q9C698-1"/>
    <property type="protein sequence ID" value="AT1G47900.1"/>
    <property type="gene ID" value="AT1G47900"/>
</dbReference>
<dbReference type="EnsemblPlants" id="AT1G47900.3">
    <molecule id="Q9C698-1"/>
    <property type="protein sequence ID" value="AT1G47900.3"/>
    <property type="gene ID" value="AT1G47900"/>
</dbReference>
<dbReference type="GeneID" id="841207"/>
<dbReference type="Gramene" id="AT1G47900.1">
    <molecule id="Q9C698-1"/>
    <property type="protein sequence ID" value="AT1G47900.1"/>
    <property type="gene ID" value="AT1G47900"/>
</dbReference>
<dbReference type="Gramene" id="AT1G47900.3">
    <molecule id="Q9C698-1"/>
    <property type="protein sequence ID" value="AT1G47900.3"/>
    <property type="gene ID" value="AT1G47900"/>
</dbReference>
<dbReference type="KEGG" id="ath:AT1G47900"/>
<dbReference type="Araport" id="AT1G47900"/>
<dbReference type="TAIR" id="AT1G47900"/>
<dbReference type="eggNOG" id="ENOG502QU34">
    <property type="taxonomic scope" value="Eukaryota"/>
</dbReference>
<dbReference type="InParanoid" id="Q9C698"/>
<dbReference type="PhylomeDB" id="Q9C698"/>
<dbReference type="PRO" id="PR:Q9C698"/>
<dbReference type="Proteomes" id="UP000006548">
    <property type="component" value="Chromosome 1"/>
</dbReference>
<dbReference type="ExpressionAtlas" id="Q9C698">
    <property type="expression patterns" value="baseline and differential"/>
</dbReference>
<dbReference type="Gene3D" id="1.20.5.170">
    <property type="match status" value="1"/>
</dbReference>
<dbReference type="InterPro" id="IPR008587">
    <property type="entry name" value="FPP_plant"/>
</dbReference>
<dbReference type="PANTHER" id="PTHR31580">
    <property type="entry name" value="FILAMENT-LIKE PLANT PROTEIN 4"/>
    <property type="match status" value="1"/>
</dbReference>
<dbReference type="PANTHER" id="PTHR31580:SF4">
    <property type="entry name" value="FILAMENT-LIKE PLANT PROTEIN 6"/>
    <property type="match status" value="1"/>
</dbReference>
<dbReference type="Pfam" id="PF05911">
    <property type="entry name" value="FPP"/>
    <property type="match status" value="1"/>
</dbReference>
<dbReference type="SUPFAM" id="SSF57997">
    <property type="entry name" value="Tropomyosin"/>
    <property type="match status" value="1"/>
</dbReference>
<evidence type="ECO:0000250" key="1"/>
<evidence type="ECO:0000255" key="2"/>
<evidence type="ECO:0000256" key="3">
    <source>
        <dbReference type="SAM" id="MobiDB-lite"/>
    </source>
</evidence>
<evidence type="ECO:0000305" key="4"/>
<gene>
    <name type="primary">FPP6</name>
    <name type="ordered locus">At1g47900</name>
    <name type="ORF">T6B12.1</name>
</gene>
<protein>
    <recommendedName>
        <fullName>Filament-like plant protein 6</fullName>
        <shortName>AtFPP6</shortName>
    </recommendedName>
</protein>
<accession>Q9C698</accession>
<comment type="subunit">
    <text evidence="1">Interacts with WPP/MAF proteins.</text>
</comment>
<comment type="alternative products">
    <event type="alternative splicing"/>
    <isoform>
        <id>Q9C698-1</id>
        <name>1</name>
        <sequence type="displayed"/>
    </isoform>
    <text>A number of isoforms are produced. According to EST sequences.</text>
</comment>
<comment type="similarity">
    <text evidence="4">Belongs to the FPP family.</text>
</comment>
<proteinExistence type="evidence at protein level"/>
<organism>
    <name type="scientific">Arabidopsis thaliana</name>
    <name type="common">Mouse-ear cress</name>
    <dbReference type="NCBI Taxonomy" id="3702"/>
    <lineage>
        <taxon>Eukaryota</taxon>
        <taxon>Viridiplantae</taxon>
        <taxon>Streptophyta</taxon>
        <taxon>Embryophyta</taxon>
        <taxon>Tracheophyta</taxon>
        <taxon>Spermatophyta</taxon>
        <taxon>Magnoliopsida</taxon>
        <taxon>eudicotyledons</taxon>
        <taxon>Gunneridae</taxon>
        <taxon>Pentapetalae</taxon>
        <taxon>rosids</taxon>
        <taxon>malvids</taxon>
        <taxon>Brassicales</taxon>
        <taxon>Brassicaceae</taxon>
        <taxon>Camelineae</taxon>
        <taxon>Arabidopsis</taxon>
    </lineage>
</organism>
<reference key="1">
    <citation type="journal article" date="2000" name="Nature">
        <title>Sequence and analysis of chromosome 1 of the plant Arabidopsis thaliana.</title>
        <authorList>
            <person name="Theologis A."/>
            <person name="Ecker J.R."/>
            <person name="Palm C.J."/>
            <person name="Federspiel N.A."/>
            <person name="Kaul S."/>
            <person name="White O."/>
            <person name="Alonso J."/>
            <person name="Altafi H."/>
            <person name="Araujo R."/>
            <person name="Bowman C.L."/>
            <person name="Brooks S.Y."/>
            <person name="Buehler E."/>
            <person name="Chan A."/>
            <person name="Chao Q."/>
            <person name="Chen H."/>
            <person name="Cheuk R.F."/>
            <person name="Chin C.W."/>
            <person name="Chung M.K."/>
            <person name="Conn L."/>
            <person name="Conway A.B."/>
            <person name="Conway A.R."/>
            <person name="Creasy T.H."/>
            <person name="Dewar K."/>
            <person name="Dunn P."/>
            <person name="Etgu P."/>
            <person name="Feldblyum T.V."/>
            <person name="Feng J.-D."/>
            <person name="Fong B."/>
            <person name="Fujii C.Y."/>
            <person name="Gill J.E."/>
            <person name="Goldsmith A.D."/>
            <person name="Haas B."/>
            <person name="Hansen N.F."/>
            <person name="Hughes B."/>
            <person name="Huizar L."/>
            <person name="Hunter J.L."/>
            <person name="Jenkins J."/>
            <person name="Johnson-Hopson C."/>
            <person name="Khan S."/>
            <person name="Khaykin E."/>
            <person name="Kim C.J."/>
            <person name="Koo H.L."/>
            <person name="Kremenetskaia I."/>
            <person name="Kurtz D.B."/>
            <person name="Kwan A."/>
            <person name="Lam B."/>
            <person name="Langin-Hooper S."/>
            <person name="Lee A."/>
            <person name="Lee J.M."/>
            <person name="Lenz C.A."/>
            <person name="Li J.H."/>
            <person name="Li Y.-P."/>
            <person name="Lin X."/>
            <person name="Liu S.X."/>
            <person name="Liu Z.A."/>
            <person name="Luros J.S."/>
            <person name="Maiti R."/>
            <person name="Marziali A."/>
            <person name="Militscher J."/>
            <person name="Miranda M."/>
            <person name="Nguyen M."/>
            <person name="Nierman W.C."/>
            <person name="Osborne B.I."/>
            <person name="Pai G."/>
            <person name="Peterson J."/>
            <person name="Pham P.K."/>
            <person name="Rizzo M."/>
            <person name="Rooney T."/>
            <person name="Rowley D."/>
            <person name="Sakano H."/>
            <person name="Salzberg S.L."/>
            <person name="Schwartz J.R."/>
            <person name="Shinn P."/>
            <person name="Southwick A.M."/>
            <person name="Sun H."/>
            <person name="Tallon L.J."/>
            <person name="Tambunga G."/>
            <person name="Toriumi M.J."/>
            <person name="Town C.D."/>
            <person name="Utterback T."/>
            <person name="Van Aken S."/>
            <person name="Vaysberg M."/>
            <person name="Vysotskaia V.S."/>
            <person name="Walker M."/>
            <person name="Wu D."/>
            <person name="Yu G."/>
            <person name="Fraser C.M."/>
            <person name="Venter J.C."/>
            <person name="Davis R.W."/>
        </authorList>
    </citation>
    <scope>NUCLEOTIDE SEQUENCE [LARGE SCALE GENOMIC DNA]</scope>
    <source>
        <strain>cv. Columbia</strain>
    </source>
</reference>
<reference key="2">
    <citation type="journal article" date="2017" name="Plant J.">
        <title>Araport11: a complete reannotation of the Arabidopsis thaliana reference genome.</title>
        <authorList>
            <person name="Cheng C.Y."/>
            <person name="Krishnakumar V."/>
            <person name="Chan A.P."/>
            <person name="Thibaud-Nissen F."/>
            <person name="Schobel S."/>
            <person name="Town C.D."/>
        </authorList>
    </citation>
    <scope>GENOME REANNOTATION</scope>
    <source>
        <strain>cv. Columbia</strain>
    </source>
</reference>
<reference key="3">
    <citation type="journal article" date="2002" name="BMC Genomics">
        <title>Four signature motifs define the first class of structurally related large coiled-coil proteins in plants.</title>
        <authorList>
            <person name="Gindullis F."/>
            <person name="Rose A."/>
            <person name="Patel S."/>
            <person name="Meier I."/>
        </authorList>
    </citation>
    <scope>GENE FAMILY</scope>
    <scope>NOMENCLATURE</scope>
</reference>
<reference key="4">
    <citation type="journal article" date="2009" name="Plant Physiol.">
        <title>Large-scale Arabidopsis phosphoproteome profiling reveals novel chloroplast kinase substrates and phosphorylation networks.</title>
        <authorList>
            <person name="Reiland S."/>
            <person name="Messerli G."/>
            <person name="Baerenfaller K."/>
            <person name="Gerrits B."/>
            <person name="Endler A."/>
            <person name="Grossmann J."/>
            <person name="Gruissem W."/>
            <person name="Baginsky S."/>
        </authorList>
    </citation>
    <scope>IDENTIFICATION BY MASS SPECTROMETRY [LARGE SCALE ANALYSIS]</scope>
</reference>